<feature type="chain" id="PRO_1000121290" description="DNA-directed RNA polymerase subunit omega">
    <location>
        <begin position="1"/>
        <end position="99"/>
    </location>
</feature>
<keyword id="KW-0240">DNA-directed RNA polymerase</keyword>
<keyword id="KW-0548">Nucleotidyltransferase</keyword>
<keyword id="KW-0804">Transcription</keyword>
<keyword id="KW-0808">Transferase</keyword>
<reference key="1">
    <citation type="journal article" date="2008" name="J. Biotechnol.">
        <title>The genome of Xanthomonas campestris pv. campestris B100 and its use for the reconstruction of metabolic pathways involved in xanthan biosynthesis.</title>
        <authorList>
            <person name="Vorhoelter F.-J."/>
            <person name="Schneiker S."/>
            <person name="Goesmann A."/>
            <person name="Krause L."/>
            <person name="Bekel T."/>
            <person name="Kaiser O."/>
            <person name="Linke B."/>
            <person name="Patschkowski T."/>
            <person name="Rueckert C."/>
            <person name="Schmid J."/>
            <person name="Sidhu V.K."/>
            <person name="Sieber V."/>
            <person name="Tauch A."/>
            <person name="Watt S.A."/>
            <person name="Weisshaar B."/>
            <person name="Becker A."/>
            <person name="Niehaus K."/>
            <person name="Puehler A."/>
        </authorList>
    </citation>
    <scope>NUCLEOTIDE SEQUENCE [LARGE SCALE GENOMIC DNA]</scope>
    <source>
        <strain>B100</strain>
    </source>
</reference>
<sequence>MARITVEDCLEVVNNRFELVMMASKRARQLANGVQPLIENADASDKPTVMALREIAARRIDNALIDEVEKAERERAEREALEWAAAEVVADEDMSKNDD</sequence>
<comment type="function">
    <text evidence="1">Promotes RNA polymerase assembly. Latches the N- and C-terminal regions of the beta' subunit thereby facilitating its interaction with the beta and alpha subunits.</text>
</comment>
<comment type="catalytic activity">
    <reaction evidence="1">
        <text>RNA(n) + a ribonucleoside 5'-triphosphate = RNA(n+1) + diphosphate</text>
        <dbReference type="Rhea" id="RHEA:21248"/>
        <dbReference type="Rhea" id="RHEA-COMP:14527"/>
        <dbReference type="Rhea" id="RHEA-COMP:17342"/>
        <dbReference type="ChEBI" id="CHEBI:33019"/>
        <dbReference type="ChEBI" id="CHEBI:61557"/>
        <dbReference type="ChEBI" id="CHEBI:140395"/>
        <dbReference type="EC" id="2.7.7.6"/>
    </reaction>
</comment>
<comment type="subunit">
    <text evidence="1">The RNAP catalytic core consists of 2 alpha, 1 beta, 1 beta' and 1 omega subunit. When a sigma factor is associated with the core the holoenzyme is formed, which can initiate transcription.</text>
</comment>
<comment type="similarity">
    <text evidence="1">Belongs to the RNA polymerase subunit omega family.</text>
</comment>
<protein>
    <recommendedName>
        <fullName evidence="1">DNA-directed RNA polymerase subunit omega</fullName>
        <shortName evidence="1">RNAP omega subunit</shortName>
        <ecNumber evidence="1">2.7.7.6</ecNumber>
    </recommendedName>
    <alternativeName>
        <fullName evidence="1">RNA polymerase omega subunit</fullName>
    </alternativeName>
    <alternativeName>
        <fullName evidence="1">Transcriptase subunit omega</fullName>
    </alternativeName>
</protein>
<accession>B0RP99</accession>
<dbReference type="EC" id="2.7.7.6" evidence="1"/>
<dbReference type="EMBL" id="AM920689">
    <property type="protein sequence ID" value="CAP50284.1"/>
    <property type="molecule type" value="Genomic_DNA"/>
</dbReference>
<dbReference type="SMR" id="B0RP99"/>
<dbReference type="KEGG" id="xca:xcc-b100_0936"/>
<dbReference type="HOGENOM" id="CLU_125406_5_3_6"/>
<dbReference type="Proteomes" id="UP000001188">
    <property type="component" value="Chromosome"/>
</dbReference>
<dbReference type="GO" id="GO:0000428">
    <property type="term" value="C:DNA-directed RNA polymerase complex"/>
    <property type="evidence" value="ECO:0007669"/>
    <property type="project" value="UniProtKB-KW"/>
</dbReference>
<dbReference type="GO" id="GO:0003677">
    <property type="term" value="F:DNA binding"/>
    <property type="evidence" value="ECO:0007669"/>
    <property type="project" value="UniProtKB-UniRule"/>
</dbReference>
<dbReference type="GO" id="GO:0003899">
    <property type="term" value="F:DNA-directed RNA polymerase activity"/>
    <property type="evidence" value="ECO:0007669"/>
    <property type="project" value="UniProtKB-UniRule"/>
</dbReference>
<dbReference type="GO" id="GO:0006351">
    <property type="term" value="P:DNA-templated transcription"/>
    <property type="evidence" value="ECO:0007669"/>
    <property type="project" value="UniProtKB-UniRule"/>
</dbReference>
<dbReference type="Gene3D" id="3.90.940.10">
    <property type="match status" value="1"/>
</dbReference>
<dbReference type="HAMAP" id="MF_00366">
    <property type="entry name" value="RNApol_bact_RpoZ"/>
    <property type="match status" value="1"/>
</dbReference>
<dbReference type="InterPro" id="IPR003716">
    <property type="entry name" value="DNA-dir_RNA_pol_omega"/>
</dbReference>
<dbReference type="InterPro" id="IPR006110">
    <property type="entry name" value="Pol_omega/Rpo6/RPB6"/>
</dbReference>
<dbReference type="InterPro" id="IPR036161">
    <property type="entry name" value="RPB6/omega-like_sf"/>
</dbReference>
<dbReference type="NCBIfam" id="TIGR00690">
    <property type="entry name" value="rpoZ"/>
    <property type="match status" value="1"/>
</dbReference>
<dbReference type="PANTHER" id="PTHR34476">
    <property type="entry name" value="DNA-DIRECTED RNA POLYMERASE SUBUNIT OMEGA"/>
    <property type="match status" value="1"/>
</dbReference>
<dbReference type="PANTHER" id="PTHR34476:SF1">
    <property type="entry name" value="DNA-DIRECTED RNA POLYMERASE SUBUNIT OMEGA"/>
    <property type="match status" value="1"/>
</dbReference>
<dbReference type="Pfam" id="PF01192">
    <property type="entry name" value="RNA_pol_Rpb6"/>
    <property type="match status" value="1"/>
</dbReference>
<dbReference type="SMART" id="SM01409">
    <property type="entry name" value="RNA_pol_Rpb6"/>
    <property type="match status" value="1"/>
</dbReference>
<dbReference type="SUPFAM" id="SSF63562">
    <property type="entry name" value="RPB6/omega subunit-like"/>
    <property type="match status" value="1"/>
</dbReference>
<gene>
    <name evidence="1" type="primary">rpoZ</name>
    <name type="ordered locus">xcc-b100_0936</name>
</gene>
<name>RPOZ_XANCB</name>
<organism>
    <name type="scientific">Xanthomonas campestris pv. campestris (strain B100)</name>
    <dbReference type="NCBI Taxonomy" id="509169"/>
    <lineage>
        <taxon>Bacteria</taxon>
        <taxon>Pseudomonadati</taxon>
        <taxon>Pseudomonadota</taxon>
        <taxon>Gammaproteobacteria</taxon>
        <taxon>Lysobacterales</taxon>
        <taxon>Lysobacteraceae</taxon>
        <taxon>Xanthomonas</taxon>
    </lineage>
</organism>
<proteinExistence type="inferred from homology"/>
<evidence type="ECO:0000255" key="1">
    <source>
        <dbReference type="HAMAP-Rule" id="MF_00366"/>
    </source>
</evidence>